<dbReference type="EMBL" id="CR378673">
    <property type="protein sequence ID" value="CAG21673.1"/>
    <property type="status" value="ALT_INIT"/>
    <property type="molecule type" value="Genomic_DNA"/>
</dbReference>
<dbReference type="RefSeq" id="WP_006233714.1">
    <property type="nucleotide sequence ID" value="NC_006370.1"/>
</dbReference>
<dbReference type="SMR" id="Q6LM05"/>
<dbReference type="STRING" id="298386.PBPRA3388"/>
<dbReference type="KEGG" id="ppr:PBPRA3388"/>
<dbReference type="eggNOG" id="COG0234">
    <property type="taxonomic scope" value="Bacteria"/>
</dbReference>
<dbReference type="HOGENOM" id="CLU_132825_1_1_6"/>
<dbReference type="Proteomes" id="UP000000593">
    <property type="component" value="Chromosome 1"/>
</dbReference>
<dbReference type="GO" id="GO:0005737">
    <property type="term" value="C:cytoplasm"/>
    <property type="evidence" value="ECO:0007669"/>
    <property type="project" value="UniProtKB-SubCell"/>
</dbReference>
<dbReference type="GO" id="GO:0005524">
    <property type="term" value="F:ATP binding"/>
    <property type="evidence" value="ECO:0007669"/>
    <property type="project" value="InterPro"/>
</dbReference>
<dbReference type="GO" id="GO:0046872">
    <property type="term" value="F:metal ion binding"/>
    <property type="evidence" value="ECO:0007669"/>
    <property type="project" value="TreeGrafter"/>
</dbReference>
<dbReference type="GO" id="GO:0044183">
    <property type="term" value="F:protein folding chaperone"/>
    <property type="evidence" value="ECO:0007669"/>
    <property type="project" value="InterPro"/>
</dbReference>
<dbReference type="GO" id="GO:0051087">
    <property type="term" value="F:protein-folding chaperone binding"/>
    <property type="evidence" value="ECO:0007669"/>
    <property type="project" value="TreeGrafter"/>
</dbReference>
<dbReference type="GO" id="GO:0051082">
    <property type="term" value="F:unfolded protein binding"/>
    <property type="evidence" value="ECO:0007669"/>
    <property type="project" value="TreeGrafter"/>
</dbReference>
<dbReference type="GO" id="GO:0051085">
    <property type="term" value="P:chaperone cofactor-dependent protein refolding"/>
    <property type="evidence" value="ECO:0007669"/>
    <property type="project" value="TreeGrafter"/>
</dbReference>
<dbReference type="CDD" id="cd00320">
    <property type="entry name" value="cpn10"/>
    <property type="match status" value="1"/>
</dbReference>
<dbReference type="FunFam" id="2.30.33.40:FF:000001">
    <property type="entry name" value="10 kDa chaperonin"/>
    <property type="match status" value="1"/>
</dbReference>
<dbReference type="Gene3D" id="2.30.33.40">
    <property type="entry name" value="GroES chaperonin"/>
    <property type="match status" value="1"/>
</dbReference>
<dbReference type="HAMAP" id="MF_00580">
    <property type="entry name" value="CH10"/>
    <property type="match status" value="1"/>
</dbReference>
<dbReference type="InterPro" id="IPR020818">
    <property type="entry name" value="Chaperonin_GroES"/>
</dbReference>
<dbReference type="InterPro" id="IPR037124">
    <property type="entry name" value="Chaperonin_GroES_sf"/>
</dbReference>
<dbReference type="InterPro" id="IPR018369">
    <property type="entry name" value="Chaprnonin_Cpn10_CS"/>
</dbReference>
<dbReference type="InterPro" id="IPR011032">
    <property type="entry name" value="GroES-like_sf"/>
</dbReference>
<dbReference type="NCBIfam" id="NF001526">
    <property type="entry name" value="PRK00364.1-1"/>
    <property type="match status" value="1"/>
</dbReference>
<dbReference type="NCBIfam" id="NF001527">
    <property type="entry name" value="PRK00364.1-2"/>
    <property type="match status" value="1"/>
</dbReference>
<dbReference type="NCBIfam" id="NF001531">
    <property type="entry name" value="PRK00364.2-2"/>
    <property type="match status" value="1"/>
</dbReference>
<dbReference type="PANTHER" id="PTHR10772">
    <property type="entry name" value="10 KDA HEAT SHOCK PROTEIN"/>
    <property type="match status" value="1"/>
</dbReference>
<dbReference type="PANTHER" id="PTHR10772:SF58">
    <property type="entry name" value="CO-CHAPERONIN GROES"/>
    <property type="match status" value="1"/>
</dbReference>
<dbReference type="Pfam" id="PF00166">
    <property type="entry name" value="Cpn10"/>
    <property type="match status" value="1"/>
</dbReference>
<dbReference type="PRINTS" id="PR00297">
    <property type="entry name" value="CHAPERONIN10"/>
</dbReference>
<dbReference type="SMART" id="SM00883">
    <property type="entry name" value="Cpn10"/>
    <property type="match status" value="1"/>
</dbReference>
<dbReference type="SUPFAM" id="SSF50129">
    <property type="entry name" value="GroES-like"/>
    <property type="match status" value="1"/>
</dbReference>
<dbReference type="PROSITE" id="PS00681">
    <property type="entry name" value="CHAPERONINS_CPN10"/>
    <property type="match status" value="1"/>
</dbReference>
<gene>
    <name evidence="1" type="primary">groES</name>
    <name evidence="1" type="synonym">groS</name>
    <name type="ordered locus">PBPRA3388</name>
</gene>
<sequence length="96" mass="10297">MNIRPLHDRVIVERQEVESKSAGGIVLTGSAAEKSTRGVVLAVGKGRILENGTVQELDVKVGDTVIFAEGYGTKSEKIDGKEVLIMSENDIMAIVE</sequence>
<feature type="chain" id="PRO_0000174801" description="Co-chaperonin GroES">
    <location>
        <begin position="1"/>
        <end position="96"/>
    </location>
</feature>
<comment type="function">
    <text evidence="1">Together with the chaperonin GroEL, plays an essential role in assisting protein folding. The GroEL-GroES system forms a nano-cage that allows encapsulation of the non-native substrate proteins and provides a physical environment optimized to promote and accelerate protein folding. GroES binds to the apical surface of the GroEL ring, thereby capping the opening of the GroEL channel.</text>
</comment>
<comment type="subunit">
    <text evidence="1">Heptamer of 7 subunits arranged in a ring. Interacts with the chaperonin GroEL.</text>
</comment>
<comment type="subcellular location">
    <subcellularLocation>
        <location evidence="1">Cytoplasm</location>
    </subcellularLocation>
</comment>
<comment type="similarity">
    <text evidence="1">Belongs to the GroES chaperonin family.</text>
</comment>
<comment type="sequence caution" evidence="2">
    <conflict type="erroneous initiation">
        <sequence resource="EMBL-CDS" id="CAG21673"/>
    </conflict>
</comment>
<accession>Q6LM05</accession>
<name>CH10_PHOPR</name>
<protein>
    <recommendedName>
        <fullName evidence="1">Co-chaperonin GroES</fullName>
    </recommendedName>
    <alternativeName>
        <fullName evidence="1">10 kDa chaperonin</fullName>
    </alternativeName>
    <alternativeName>
        <fullName evidence="1">Chaperonin-10</fullName>
        <shortName evidence="1">Cpn10</shortName>
    </alternativeName>
</protein>
<organism>
    <name type="scientific">Photobacterium profundum (strain SS9)</name>
    <dbReference type="NCBI Taxonomy" id="298386"/>
    <lineage>
        <taxon>Bacteria</taxon>
        <taxon>Pseudomonadati</taxon>
        <taxon>Pseudomonadota</taxon>
        <taxon>Gammaproteobacteria</taxon>
        <taxon>Vibrionales</taxon>
        <taxon>Vibrionaceae</taxon>
        <taxon>Photobacterium</taxon>
    </lineage>
</organism>
<evidence type="ECO:0000255" key="1">
    <source>
        <dbReference type="HAMAP-Rule" id="MF_00580"/>
    </source>
</evidence>
<evidence type="ECO:0000305" key="2"/>
<proteinExistence type="inferred from homology"/>
<reference key="1">
    <citation type="journal article" date="2005" name="Science">
        <title>Life at depth: Photobacterium profundum genome sequence and expression analysis.</title>
        <authorList>
            <person name="Vezzi A."/>
            <person name="Campanaro S."/>
            <person name="D'Angelo M."/>
            <person name="Simonato F."/>
            <person name="Vitulo N."/>
            <person name="Lauro F.M."/>
            <person name="Cestaro A."/>
            <person name="Malacrida G."/>
            <person name="Simionati B."/>
            <person name="Cannata N."/>
            <person name="Romualdi C."/>
            <person name="Bartlett D.H."/>
            <person name="Valle G."/>
        </authorList>
    </citation>
    <scope>NUCLEOTIDE SEQUENCE [LARGE SCALE GENOMIC DNA]</scope>
    <source>
        <strain>ATCC BAA-1253 / SS9</strain>
    </source>
</reference>
<keyword id="KW-0143">Chaperone</keyword>
<keyword id="KW-0963">Cytoplasm</keyword>
<keyword id="KW-1185">Reference proteome</keyword>